<organism>
    <name type="scientific">Photobacterium profundum (strain SS9)</name>
    <dbReference type="NCBI Taxonomy" id="298386"/>
    <lineage>
        <taxon>Bacteria</taxon>
        <taxon>Pseudomonadati</taxon>
        <taxon>Pseudomonadota</taxon>
        <taxon>Gammaproteobacteria</taxon>
        <taxon>Vibrionales</taxon>
        <taxon>Vibrionaceae</taxon>
        <taxon>Photobacterium</taxon>
    </lineage>
</organism>
<dbReference type="EMBL" id="CR378673">
    <property type="protein sequence ID" value="CAG21470.1"/>
    <property type="molecule type" value="Genomic_DNA"/>
</dbReference>
<dbReference type="RefSeq" id="WP_006232512.1">
    <property type="nucleotide sequence ID" value="NC_006370.1"/>
</dbReference>
<dbReference type="SMR" id="Q6LMK7"/>
<dbReference type="STRING" id="298386.PBPRA3155"/>
<dbReference type="KEGG" id="ppr:PBPRA3155"/>
<dbReference type="eggNOG" id="COG2924">
    <property type="taxonomic scope" value="Bacteria"/>
</dbReference>
<dbReference type="HOGENOM" id="CLU_170994_0_0_6"/>
<dbReference type="Proteomes" id="UP000000593">
    <property type="component" value="Chromosome 1"/>
</dbReference>
<dbReference type="GO" id="GO:0005829">
    <property type="term" value="C:cytosol"/>
    <property type="evidence" value="ECO:0007669"/>
    <property type="project" value="TreeGrafter"/>
</dbReference>
<dbReference type="GO" id="GO:0005506">
    <property type="term" value="F:iron ion binding"/>
    <property type="evidence" value="ECO:0007669"/>
    <property type="project" value="UniProtKB-UniRule"/>
</dbReference>
<dbReference type="GO" id="GO:0034599">
    <property type="term" value="P:cellular response to oxidative stress"/>
    <property type="evidence" value="ECO:0007669"/>
    <property type="project" value="TreeGrafter"/>
</dbReference>
<dbReference type="FunFam" id="1.10.3880.10:FF:000001">
    <property type="entry name" value="Probable Fe(2+)-trafficking protein"/>
    <property type="match status" value="1"/>
</dbReference>
<dbReference type="Gene3D" id="1.10.3880.10">
    <property type="entry name" value="Fe(II) trafficking protein YggX"/>
    <property type="match status" value="1"/>
</dbReference>
<dbReference type="HAMAP" id="MF_00686">
    <property type="entry name" value="Fe_traffic_YggX"/>
    <property type="match status" value="1"/>
</dbReference>
<dbReference type="InterPro" id="IPR007457">
    <property type="entry name" value="Fe_traffick_prot_YggX"/>
</dbReference>
<dbReference type="InterPro" id="IPR036766">
    <property type="entry name" value="Fe_traffick_prot_YggX_sf"/>
</dbReference>
<dbReference type="NCBIfam" id="NF003817">
    <property type="entry name" value="PRK05408.1"/>
    <property type="match status" value="1"/>
</dbReference>
<dbReference type="PANTHER" id="PTHR36965">
    <property type="entry name" value="FE(2+)-TRAFFICKING PROTEIN-RELATED"/>
    <property type="match status" value="1"/>
</dbReference>
<dbReference type="PANTHER" id="PTHR36965:SF1">
    <property type="entry name" value="FE(2+)-TRAFFICKING PROTEIN-RELATED"/>
    <property type="match status" value="1"/>
</dbReference>
<dbReference type="Pfam" id="PF04362">
    <property type="entry name" value="Iron_traffic"/>
    <property type="match status" value="1"/>
</dbReference>
<dbReference type="PIRSF" id="PIRSF029827">
    <property type="entry name" value="Fe_traffic_YggX"/>
    <property type="match status" value="1"/>
</dbReference>
<dbReference type="SUPFAM" id="SSF111148">
    <property type="entry name" value="YggX-like"/>
    <property type="match status" value="1"/>
</dbReference>
<protein>
    <recommendedName>
        <fullName evidence="1">Probable Fe(2+)-trafficking protein</fullName>
    </recommendedName>
</protein>
<accession>Q6LMK7</accession>
<reference key="1">
    <citation type="journal article" date="2005" name="Science">
        <title>Life at depth: Photobacterium profundum genome sequence and expression analysis.</title>
        <authorList>
            <person name="Vezzi A."/>
            <person name="Campanaro S."/>
            <person name="D'Angelo M."/>
            <person name="Simonato F."/>
            <person name="Vitulo N."/>
            <person name="Lauro F.M."/>
            <person name="Cestaro A."/>
            <person name="Malacrida G."/>
            <person name="Simionati B."/>
            <person name="Cannata N."/>
            <person name="Romualdi C."/>
            <person name="Bartlett D.H."/>
            <person name="Valle G."/>
        </authorList>
    </citation>
    <scope>NUCLEOTIDE SEQUENCE [LARGE SCALE GENOMIC DNA]</scope>
    <source>
        <strain>ATCC BAA-1253 / SS9</strain>
    </source>
</reference>
<feature type="chain" id="PRO_0000214497" description="Probable Fe(2+)-trafficking protein">
    <location>
        <begin position="1"/>
        <end position="90"/>
    </location>
</feature>
<sequence length="90" mass="10558">MSRTVFCTRLKKDAEGLDFQLYPGDLGKRIFDNISKEAWAEWQSKQTMLINEKKLNMMNVDHRKLLETEMVNFLFEGQDVIIEGYTPPSK</sequence>
<gene>
    <name type="ordered locus">PBPRA3155</name>
</gene>
<comment type="function">
    <text evidence="1">Could be a mediator in iron transactions between iron acquisition and iron-requiring processes, such as synthesis and/or repair of Fe-S clusters in biosynthetic enzymes.</text>
</comment>
<comment type="similarity">
    <text evidence="1">Belongs to the Fe(2+)-trafficking protein family.</text>
</comment>
<evidence type="ECO:0000255" key="1">
    <source>
        <dbReference type="HAMAP-Rule" id="MF_00686"/>
    </source>
</evidence>
<name>FETP_PHOPR</name>
<proteinExistence type="inferred from homology"/>
<keyword id="KW-0408">Iron</keyword>
<keyword id="KW-1185">Reference proteome</keyword>